<accession>Q566X6</accession>
<gene>
    <name type="primary">ptcd2</name>
    <name type="ORF">zgc:112401</name>
</gene>
<dbReference type="EMBL" id="BC093286">
    <property type="protein sequence ID" value="AAH93286.1"/>
    <property type="molecule type" value="mRNA"/>
</dbReference>
<dbReference type="RefSeq" id="NP_001017612.1">
    <property type="nucleotide sequence ID" value="NM_001017612.1"/>
</dbReference>
<dbReference type="SMR" id="Q566X6"/>
<dbReference type="FunCoup" id="Q566X6">
    <property type="interactions" value="1103"/>
</dbReference>
<dbReference type="PaxDb" id="7955-ENSDARP00000097803"/>
<dbReference type="GeneID" id="550275"/>
<dbReference type="KEGG" id="dre:550275"/>
<dbReference type="AGR" id="ZFIN:ZDB-GENE-050417-82"/>
<dbReference type="CTD" id="79810"/>
<dbReference type="ZFIN" id="ZDB-GENE-050417-82">
    <property type="gene designation" value="ptcd2"/>
</dbReference>
<dbReference type="eggNOG" id="ENOG502R1K6">
    <property type="taxonomic scope" value="Eukaryota"/>
</dbReference>
<dbReference type="InParanoid" id="Q566X6"/>
<dbReference type="OrthoDB" id="6073372at2759"/>
<dbReference type="PhylomeDB" id="Q566X6"/>
<dbReference type="PRO" id="PR:Q566X6"/>
<dbReference type="Proteomes" id="UP000000437">
    <property type="component" value="Alternate scaffold 5"/>
</dbReference>
<dbReference type="Proteomes" id="UP000000437">
    <property type="component" value="Chromosome 5"/>
</dbReference>
<dbReference type="GO" id="GO:0005739">
    <property type="term" value="C:mitochondrion"/>
    <property type="evidence" value="ECO:0000250"/>
    <property type="project" value="UniProtKB"/>
</dbReference>
<dbReference type="GO" id="GO:0007005">
    <property type="term" value="P:mitochondrion organization"/>
    <property type="evidence" value="ECO:0000318"/>
    <property type="project" value="GO_Central"/>
</dbReference>
<dbReference type="GO" id="GO:0006397">
    <property type="term" value="P:mRNA processing"/>
    <property type="evidence" value="ECO:0007669"/>
    <property type="project" value="UniProtKB-KW"/>
</dbReference>
<dbReference type="GO" id="GO:0050684">
    <property type="term" value="P:regulation of mRNA processing"/>
    <property type="evidence" value="ECO:0000250"/>
    <property type="project" value="UniProtKB"/>
</dbReference>
<dbReference type="Gene3D" id="1.25.40.10">
    <property type="entry name" value="Tetratricopeptide repeat domain"/>
    <property type="match status" value="1"/>
</dbReference>
<dbReference type="InterPro" id="IPR034913">
    <property type="entry name" value="mS27/PTCD2"/>
</dbReference>
<dbReference type="InterPro" id="IPR002885">
    <property type="entry name" value="Pentatricopeptide_rpt"/>
</dbReference>
<dbReference type="InterPro" id="IPR034629">
    <property type="entry name" value="PTCD2"/>
</dbReference>
<dbReference type="InterPro" id="IPR011990">
    <property type="entry name" value="TPR-like_helical_dom_sf"/>
</dbReference>
<dbReference type="PANTHER" id="PTHR14700">
    <property type="entry name" value="PENTATRICOPEPTIDE REPEAT-CONTAINING PROTEIN 2, MITOCHONDRIAL"/>
    <property type="match status" value="1"/>
</dbReference>
<dbReference type="PANTHER" id="PTHR14700:SF0">
    <property type="entry name" value="PENTATRICOPEPTIDE REPEAT-CONTAINING PROTEIN 2, MITOCHONDRIAL"/>
    <property type="match status" value="1"/>
</dbReference>
<dbReference type="Pfam" id="PF10037">
    <property type="entry name" value="MRP-S27"/>
    <property type="match status" value="1"/>
</dbReference>
<dbReference type="PROSITE" id="PS51375">
    <property type="entry name" value="PPR"/>
    <property type="match status" value="1"/>
</dbReference>
<evidence type="ECO:0000250" key="1"/>
<evidence type="ECO:0000305" key="2"/>
<proteinExistence type="evidence at transcript level"/>
<reference key="1">
    <citation type="submission" date="2005-04" db="EMBL/GenBank/DDBJ databases">
        <authorList>
            <consortium name="NIH - Zebrafish Gene Collection (ZGC) project"/>
        </authorList>
    </citation>
    <scope>NUCLEOTIDE SEQUENCE [LARGE SCALE MRNA]</scope>
    <source>
        <tissue>Ovary</tissue>
    </source>
</reference>
<comment type="function">
    <text evidence="1">Involved in mitochondrial RNA maturation and mitochondrial respiratory chain function.</text>
</comment>
<comment type="subcellular location">
    <subcellularLocation>
        <location evidence="1">Mitochondrion</location>
    </subcellularLocation>
</comment>
<comment type="similarity">
    <text evidence="2">Belongs to the PTCD2 family.</text>
</comment>
<protein>
    <recommendedName>
        <fullName>Pentatricopeptide repeat-containing protein 2, mitochondrial</fullName>
    </recommendedName>
</protein>
<name>PTCD2_DANRE</name>
<feature type="chain" id="PRO_0000344053" description="Pentatricopeptide repeat-containing protein 2, mitochondrial">
    <location>
        <begin position="1"/>
        <end position="381"/>
    </location>
</feature>
<feature type="repeat" description="PPR">
    <location>
        <begin position="157"/>
        <end position="191"/>
    </location>
</feature>
<keyword id="KW-0496">Mitochondrion</keyword>
<keyword id="KW-0507">mRNA processing</keyword>
<keyword id="KW-1185">Reference proteome</keyword>
<sequence length="381" mass="43858">MALQALNIWTRVILTDASRAAVFRGALQSHCFKCRHGAKRFLLSEDVVKLEEFQQKKLSHEMSQLKDYRFDIVNQKLEKNEIILKTELKTLLHSCQSAEDVIVARNVIKRYHENNRTTAFGEFKFGPLFMRLCYELGLEELAATTIKDPALKGFFSDTTSFNITIDMLFNKQLYESGLEVVGEMKKQGVSLSRDTFMLVFAICYKLNTSRSYHICLTLLEEGQTKGNIIPRRAYCFAIALALKQNDLERAQIFYSHIMSTGTRLCQNLRVFILAVKGSMKEAVYVLKTARISETPVLVRKPEFSREVVNVLRRKSAGGVWEERVEQVLTQLEKAGQITEITLDDLLCYTPSRKRRLLELPQKDRQIKQRTRKSLQSGLLLE</sequence>
<organism>
    <name type="scientific">Danio rerio</name>
    <name type="common">Zebrafish</name>
    <name type="synonym">Brachydanio rerio</name>
    <dbReference type="NCBI Taxonomy" id="7955"/>
    <lineage>
        <taxon>Eukaryota</taxon>
        <taxon>Metazoa</taxon>
        <taxon>Chordata</taxon>
        <taxon>Craniata</taxon>
        <taxon>Vertebrata</taxon>
        <taxon>Euteleostomi</taxon>
        <taxon>Actinopterygii</taxon>
        <taxon>Neopterygii</taxon>
        <taxon>Teleostei</taxon>
        <taxon>Ostariophysi</taxon>
        <taxon>Cypriniformes</taxon>
        <taxon>Danionidae</taxon>
        <taxon>Danioninae</taxon>
        <taxon>Danio</taxon>
    </lineage>
</organism>